<dbReference type="EMBL" id="AM236080">
    <property type="protein sequence ID" value="CAK09771.1"/>
    <property type="molecule type" value="Genomic_DNA"/>
</dbReference>
<dbReference type="RefSeq" id="WP_011653677.1">
    <property type="nucleotide sequence ID" value="NC_008380.1"/>
</dbReference>
<dbReference type="SMR" id="Q1MBB2"/>
<dbReference type="EnsemblBacteria" id="CAK09771">
    <property type="protein sequence ID" value="CAK09771"/>
    <property type="gene ID" value="RL4282"/>
</dbReference>
<dbReference type="KEGG" id="rle:RL4282"/>
<dbReference type="eggNOG" id="COG0216">
    <property type="taxonomic scope" value="Bacteria"/>
</dbReference>
<dbReference type="HOGENOM" id="CLU_036856_0_1_5"/>
<dbReference type="Proteomes" id="UP000006575">
    <property type="component" value="Chromosome"/>
</dbReference>
<dbReference type="GO" id="GO:0005737">
    <property type="term" value="C:cytoplasm"/>
    <property type="evidence" value="ECO:0007669"/>
    <property type="project" value="UniProtKB-SubCell"/>
</dbReference>
<dbReference type="GO" id="GO:0016149">
    <property type="term" value="F:translation release factor activity, codon specific"/>
    <property type="evidence" value="ECO:0007669"/>
    <property type="project" value="UniProtKB-UniRule"/>
</dbReference>
<dbReference type="FunFam" id="3.30.160.20:FF:000004">
    <property type="entry name" value="Peptide chain release factor 1"/>
    <property type="match status" value="1"/>
</dbReference>
<dbReference type="FunFam" id="3.30.70.1660:FF:000002">
    <property type="entry name" value="Peptide chain release factor 1"/>
    <property type="match status" value="1"/>
</dbReference>
<dbReference type="FunFam" id="3.30.70.1660:FF:000004">
    <property type="entry name" value="Peptide chain release factor 1"/>
    <property type="match status" value="1"/>
</dbReference>
<dbReference type="Gene3D" id="3.30.160.20">
    <property type="match status" value="1"/>
</dbReference>
<dbReference type="Gene3D" id="3.30.70.1660">
    <property type="match status" value="2"/>
</dbReference>
<dbReference type="Gene3D" id="6.10.140.1950">
    <property type="match status" value="1"/>
</dbReference>
<dbReference type="HAMAP" id="MF_00093">
    <property type="entry name" value="Rel_fac_1"/>
    <property type="match status" value="1"/>
</dbReference>
<dbReference type="InterPro" id="IPR005139">
    <property type="entry name" value="PCRF"/>
</dbReference>
<dbReference type="InterPro" id="IPR000352">
    <property type="entry name" value="Pep_chain_release_fac_I"/>
</dbReference>
<dbReference type="InterPro" id="IPR045853">
    <property type="entry name" value="Pep_chain_release_fac_I_sf"/>
</dbReference>
<dbReference type="InterPro" id="IPR050057">
    <property type="entry name" value="Prokaryotic/Mito_RF"/>
</dbReference>
<dbReference type="InterPro" id="IPR004373">
    <property type="entry name" value="RF-1"/>
</dbReference>
<dbReference type="NCBIfam" id="TIGR00019">
    <property type="entry name" value="prfA"/>
    <property type="match status" value="1"/>
</dbReference>
<dbReference type="NCBIfam" id="NF001859">
    <property type="entry name" value="PRK00591.1"/>
    <property type="match status" value="1"/>
</dbReference>
<dbReference type="PANTHER" id="PTHR43804">
    <property type="entry name" value="LD18447P"/>
    <property type="match status" value="1"/>
</dbReference>
<dbReference type="PANTHER" id="PTHR43804:SF7">
    <property type="entry name" value="LD18447P"/>
    <property type="match status" value="1"/>
</dbReference>
<dbReference type="Pfam" id="PF03462">
    <property type="entry name" value="PCRF"/>
    <property type="match status" value="1"/>
</dbReference>
<dbReference type="Pfam" id="PF00472">
    <property type="entry name" value="RF-1"/>
    <property type="match status" value="1"/>
</dbReference>
<dbReference type="SMART" id="SM00937">
    <property type="entry name" value="PCRF"/>
    <property type="match status" value="1"/>
</dbReference>
<dbReference type="SUPFAM" id="SSF75620">
    <property type="entry name" value="Release factor"/>
    <property type="match status" value="1"/>
</dbReference>
<dbReference type="PROSITE" id="PS00745">
    <property type="entry name" value="RF_PROK_I"/>
    <property type="match status" value="1"/>
</dbReference>
<sequence>MAKLPVEKMRELERRFGEIEARMSAGPAADVYVKLASEYSELQPVVTKIRVYEKAVTELADLETLLEDRSVDREMRDLAELELPEVKEQIEALEQEMQILLLPKDAADEKSAILEIRAGTGGSEAALFAGDLFRMYERFAAEKGWKVEVLSASEGEAGGYKEIIATITGKGVFAKLKFESGVHRVQRVPETEAGGRIHTSAATVAVLPEAEEIDIEIRAEDIRIDTMRSSGAGGQHVNTTDSAVRITHLPSGIVVTSSEKSQHQNRAKAMQVLRSRLYDAERQRADSERSADRKSQVGSGDRSERIRTYNFPQGRVTDHRINLTLYKLDRMMEGEIEEVVDALMADYQASQLAQLGEQQ</sequence>
<accession>Q1MBB2</accession>
<feature type="chain" id="PRO_0000263330" description="Peptide chain release factor 1">
    <location>
        <begin position="1"/>
        <end position="359"/>
    </location>
</feature>
<feature type="region of interest" description="Disordered" evidence="2">
    <location>
        <begin position="280"/>
        <end position="306"/>
    </location>
</feature>
<feature type="modified residue" description="N5-methylglutamine" evidence="1">
    <location>
        <position position="235"/>
    </location>
</feature>
<name>RF1_RHIJ3</name>
<organism>
    <name type="scientific">Rhizobium johnstonii (strain DSM 114642 / LMG 32736 / 3841)</name>
    <name type="common">Rhizobium leguminosarum bv. viciae</name>
    <dbReference type="NCBI Taxonomy" id="216596"/>
    <lineage>
        <taxon>Bacteria</taxon>
        <taxon>Pseudomonadati</taxon>
        <taxon>Pseudomonadota</taxon>
        <taxon>Alphaproteobacteria</taxon>
        <taxon>Hyphomicrobiales</taxon>
        <taxon>Rhizobiaceae</taxon>
        <taxon>Rhizobium/Agrobacterium group</taxon>
        <taxon>Rhizobium</taxon>
        <taxon>Rhizobium johnstonii</taxon>
    </lineage>
</organism>
<reference key="1">
    <citation type="journal article" date="2006" name="Genome Biol.">
        <title>The genome of Rhizobium leguminosarum has recognizable core and accessory components.</title>
        <authorList>
            <person name="Young J.P.W."/>
            <person name="Crossman L.C."/>
            <person name="Johnston A.W.B."/>
            <person name="Thomson N.R."/>
            <person name="Ghazoui Z.F."/>
            <person name="Hull K.H."/>
            <person name="Wexler M."/>
            <person name="Curson A.R.J."/>
            <person name="Todd J.D."/>
            <person name="Poole P.S."/>
            <person name="Mauchline T.H."/>
            <person name="East A.K."/>
            <person name="Quail M.A."/>
            <person name="Churcher C."/>
            <person name="Arrowsmith C."/>
            <person name="Cherevach I."/>
            <person name="Chillingworth T."/>
            <person name="Clarke K."/>
            <person name="Cronin A."/>
            <person name="Davis P."/>
            <person name="Fraser A."/>
            <person name="Hance Z."/>
            <person name="Hauser H."/>
            <person name="Jagels K."/>
            <person name="Moule S."/>
            <person name="Mungall K."/>
            <person name="Norbertczak H."/>
            <person name="Rabbinowitsch E."/>
            <person name="Sanders M."/>
            <person name="Simmonds M."/>
            <person name="Whitehead S."/>
            <person name="Parkhill J."/>
        </authorList>
    </citation>
    <scope>NUCLEOTIDE SEQUENCE [LARGE SCALE GENOMIC DNA]</scope>
    <source>
        <strain>DSM 114642 / LMG 32736 / 3841</strain>
    </source>
</reference>
<evidence type="ECO:0000255" key="1">
    <source>
        <dbReference type="HAMAP-Rule" id="MF_00093"/>
    </source>
</evidence>
<evidence type="ECO:0000256" key="2">
    <source>
        <dbReference type="SAM" id="MobiDB-lite"/>
    </source>
</evidence>
<proteinExistence type="inferred from homology"/>
<gene>
    <name evidence="1" type="primary">prfA</name>
    <name type="ordered locus">RL4282</name>
</gene>
<protein>
    <recommendedName>
        <fullName evidence="1">Peptide chain release factor 1</fullName>
        <shortName evidence="1">RF-1</shortName>
    </recommendedName>
</protein>
<comment type="function">
    <text evidence="1">Peptide chain release factor 1 directs the termination of translation in response to the peptide chain termination codons UAG and UAA.</text>
</comment>
<comment type="subcellular location">
    <subcellularLocation>
        <location evidence="1">Cytoplasm</location>
    </subcellularLocation>
</comment>
<comment type="PTM">
    <text evidence="1">Methylated by PrmC. Methylation increases the termination efficiency of RF1.</text>
</comment>
<comment type="similarity">
    <text evidence="1">Belongs to the prokaryotic/mitochondrial release factor family.</text>
</comment>
<keyword id="KW-0963">Cytoplasm</keyword>
<keyword id="KW-0488">Methylation</keyword>
<keyword id="KW-0648">Protein biosynthesis</keyword>